<comment type="function">
    <text evidence="1">One of two assembly initiator proteins, it binds directly to the 5'-end of the 23S rRNA, where it nucleates assembly of the 50S subunit.</text>
</comment>
<comment type="function">
    <text evidence="1">One of the proteins that surrounds the polypeptide exit tunnel on the outside of the subunit.</text>
</comment>
<comment type="subunit">
    <text evidence="1">Part of the 50S ribosomal subunit.</text>
</comment>
<comment type="similarity">
    <text evidence="1">Belongs to the universal ribosomal protein uL24 family.</text>
</comment>
<evidence type="ECO:0000255" key="1">
    <source>
        <dbReference type="HAMAP-Rule" id="MF_01326"/>
    </source>
</evidence>
<evidence type="ECO:0000305" key="2"/>
<organism>
    <name type="scientific">Serratia proteamaculans (strain 568)</name>
    <dbReference type="NCBI Taxonomy" id="399741"/>
    <lineage>
        <taxon>Bacteria</taxon>
        <taxon>Pseudomonadati</taxon>
        <taxon>Pseudomonadota</taxon>
        <taxon>Gammaproteobacteria</taxon>
        <taxon>Enterobacterales</taxon>
        <taxon>Yersiniaceae</taxon>
        <taxon>Serratia</taxon>
    </lineage>
</organism>
<name>RL24_SERP5</name>
<gene>
    <name evidence="1" type="primary">rplX</name>
    <name type="ordered locus">Spro_4533</name>
</gene>
<accession>A8GKI6</accession>
<keyword id="KW-0687">Ribonucleoprotein</keyword>
<keyword id="KW-0689">Ribosomal protein</keyword>
<keyword id="KW-0694">RNA-binding</keyword>
<keyword id="KW-0699">rRNA-binding</keyword>
<reference key="1">
    <citation type="submission" date="2007-09" db="EMBL/GenBank/DDBJ databases">
        <title>Complete sequence of chromosome of Serratia proteamaculans 568.</title>
        <authorList>
            <consortium name="US DOE Joint Genome Institute"/>
            <person name="Copeland A."/>
            <person name="Lucas S."/>
            <person name="Lapidus A."/>
            <person name="Barry K."/>
            <person name="Glavina del Rio T."/>
            <person name="Dalin E."/>
            <person name="Tice H."/>
            <person name="Pitluck S."/>
            <person name="Chain P."/>
            <person name="Malfatti S."/>
            <person name="Shin M."/>
            <person name="Vergez L."/>
            <person name="Schmutz J."/>
            <person name="Larimer F."/>
            <person name="Land M."/>
            <person name="Hauser L."/>
            <person name="Kyrpides N."/>
            <person name="Kim E."/>
            <person name="Taghavi S."/>
            <person name="Newman L."/>
            <person name="Vangronsveld J."/>
            <person name="van der Lelie D."/>
            <person name="Richardson P."/>
        </authorList>
    </citation>
    <scope>NUCLEOTIDE SEQUENCE [LARGE SCALE GENOMIC DNA]</scope>
    <source>
        <strain>568</strain>
    </source>
</reference>
<proteinExistence type="inferred from homology"/>
<dbReference type="EMBL" id="CP000826">
    <property type="protein sequence ID" value="ABV43626.1"/>
    <property type="molecule type" value="Genomic_DNA"/>
</dbReference>
<dbReference type="SMR" id="A8GKI6"/>
<dbReference type="STRING" id="399741.Spro_4533"/>
<dbReference type="KEGG" id="spe:Spro_4533"/>
<dbReference type="eggNOG" id="COG0198">
    <property type="taxonomic scope" value="Bacteria"/>
</dbReference>
<dbReference type="HOGENOM" id="CLU_093315_2_2_6"/>
<dbReference type="OrthoDB" id="9807419at2"/>
<dbReference type="GO" id="GO:1990904">
    <property type="term" value="C:ribonucleoprotein complex"/>
    <property type="evidence" value="ECO:0007669"/>
    <property type="project" value="UniProtKB-KW"/>
</dbReference>
<dbReference type="GO" id="GO:0005840">
    <property type="term" value="C:ribosome"/>
    <property type="evidence" value="ECO:0007669"/>
    <property type="project" value="UniProtKB-KW"/>
</dbReference>
<dbReference type="GO" id="GO:0019843">
    <property type="term" value="F:rRNA binding"/>
    <property type="evidence" value="ECO:0007669"/>
    <property type="project" value="UniProtKB-UniRule"/>
</dbReference>
<dbReference type="GO" id="GO:0003735">
    <property type="term" value="F:structural constituent of ribosome"/>
    <property type="evidence" value="ECO:0007669"/>
    <property type="project" value="InterPro"/>
</dbReference>
<dbReference type="GO" id="GO:0006412">
    <property type="term" value="P:translation"/>
    <property type="evidence" value="ECO:0007669"/>
    <property type="project" value="UniProtKB-UniRule"/>
</dbReference>
<dbReference type="CDD" id="cd06089">
    <property type="entry name" value="KOW_RPL26"/>
    <property type="match status" value="1"/>
</dbReference>
<dbReference type="FunFam" id="2.30.30.30:FF:000004">
    <property type="entry name" value="50S ribosomal protein L24"/>
    <property type="match status" value="1"/>
</dbReference>
<dbReference type="Gene3D" id="2.30.30.30">
    <property type="match status" value="1"/>
</dbReference>
<dbReference type="HAMAP" id="MF_01326_B">
    <property type="entry name" value="Ribosomal_uL24_B"/>
    <property type="match status" value="1"/>
</dbReference>
<dbReference type="InterPro" id="IPR005824">
    <property type="entry name" value="KOW"/>
</dbReference>
<dbReference type="InterPro" id="IPR014722">
    <property type="entry name" value="Rib_uL2_dom2"/>
</dbReference>
<dbReference type="InterPro" id="IPR003256">
    <property type="entry name" value="Ribosomal_uL24"/>
</dbReference>
<dbReference type="InterPro" id="IPR005825">
    <property type="entry name" value="Ribosomal_uL24_CS"/>
</dbReference>
<dbReference type="InterPro" id="IPR041988">
    <property type="entry name" value="Ribosomal_uL24_KOW"/>
</dbReference>
<dbReference type="InterPro" id="IPR008991">
    <property type="entry name" value="Translation_prot_SH3-like_sf"/>
</dbReference>
<dbReference type="NCBIfam" id="TIGR01079">
    <property type="entry name" value="rplX_bact"/>
    <property type="match status" value="1"/>
</dbReference>
<dbReference type="PANTHER" id="PTHR12903">
    <property type="entry name" value="MITOCHONDRIAL RIBOSOMAL PROTEIN L24"/>
    <property type="match status" value="1"/>
</dbReference>
<dbReference type="Pfam" id="PF17136">
    <property type="entry name" value="ribosomal_L24"/>
    <property type="match status" value="1"/>
</dbReference>
<dbReference type="SMART" id="SM00739">
    <property type="entry name" value="KOW"/>
    <property type="match status" value="1"/>
</dbReference>
<dbReference type="SUPFAM" id="SSF50104">
    <property type="entry name" value="Translation proteins SH3-like domain"/>
    <property type="match status" value="1"/>
</dbReference>
<dbReference type="PROSITE" id="PS01108">
    <property type="entry name" value="RIBOSOMAL_L24"/>
    <property type="match status" value="1"/>
</dbReference>
<protein>
    <recommendedName>
        <fullName evidence="1">Large ribosomal subunit protein uL24</fullName>
    </recommendedName>
    <alternativeName>
        <fullName evidence="2">50S ribosomal protein L24</fullName>
    </alternativeName>
</protein>
<sequence length="104" mass="11328">MAAKIRRDDEIIVLTGKDKGKRGKVKNVLSAGKVIVEGINLVKKHQKPVPALNQPGGIVEKEAAIQVSNIALFNAATGKADRVGFRFEDGKKVRFFKSNSETIK</sequence>
<feature type="chain" id="PRO_1000067586" description="Large ribosomal subunit protein uL24">
    <location>
        <begin position="1"/>
        <end position="104"/>
    </location>
</feature>